<reference key="1">
    <citation type="journal article" date="2003" name="Exp. Dermatol.">
        <title>A novel mouse desmosomal cadherin family member, desmoglein 1 gamma.</title>
        <authorList>
            <person name="Kljuic A."/>
            <person name="Christiano A.M."/>
        </authorList>
    </citation>
    <scope>NUCLEOTIDE SEQUENCE [MRNA] (ISOFORM 2)</scope>
    <scope>TISSUE SPECIFICITY</scope>
    <source>
        <strain>PWK</strain>
        <tissue>Skin</tissue>
    </source>
</reference>
<reference key="2">
    <citation type="journal article" date="2003" name="J. Invest. Dermatol.">
        <title>Genomic sequence analysis of the mouse desmoglein cluster reveals evidence for six distinct genes: characterization of mouse DSG4, DSG5, and DSG6.</title>
        <authorList>
            <person name="Whittock N.V."/>
        </authorList>
    </citation>
    <scope>NUCLEOTIDE SEQUENCE [MRNA] (ISOFORM 1)</scope>
    <scope>TISSUE SPECIFICITY</scope>
    <scope>DEVELOPMENTAL STAGE</scope>
    <source>
        <tissue>Skin</tissue>
    </source>
</reference>
<reference key="3">
    <citation type="journal article" date="2005" name="Mol. Cell. Proteomics">
        <title>High throughput quantitative glycomics and glycoform-focused proteomics of murine dermis and epidermis.</title>
        <authorList>
            <person name="Uematsu R."/>
            <person name="Furukawa J."/>
            <person name="Nakagawa H."/>
            <person name="Shinohara Y."/>
            <person name="Deguchi K."/>
            <person name="Monde K."/>
            <person name="Nishimura S."/>
        </authorList>
    </citation>
    <scope>GLYCOSYLATION [LARGE SCALE ANALYSIS] AT ASN-110</scope>
    <source>
        <tissue>Epidermis</tissue>
    </source>
</reference>
<gene>
    <name type="primary">Dsg1c</name>
    <name type="synonym">Dsg6</name>
</gene>
<proteinExistence type="evidence at protein level"/>
<organism>
    <name type="scientific">Mus musculus</name>
    <name type="common">Mouse</name>
    <dbReference type="NCBI Taxonomy" id="10090"/>
    <lineage>
        <taxon>Eukaryota</taxon>
        <taxon>Metazoa</taxon>
        <taxon>Chordata</taxon>
        <taxon>Craniata</taxon>
        <taxon>Vertebrata</taxon>
        <taxon>Euteleostomi</taxon>
        <taxon>Mammalia</taxon>
        <taxon>Eutheria</taxon>
        <taxon>Euarchontoglires</taxon>
        <taxon>Glires</taxon>
        <taxon>Rodentia</taxon>
        <taxon>Myomorpha</taxon>
        <taxon>Muroidea</taxon>
        <taxon>Muridae</taxon>
        <taxon>Murinae</taxon>
        <taxon>Mus</taxon>
        <taxon>Mus</taxon>
    </lineage>
</organism>
<name>DSG1C_MOUSE</name>
<comment type="function">
    <text evidence="2 3">Component of intercellular desmosome junctions (By similarity). Involved in the interaction of plaque proteins and intermediate filaments mediating cell-cell adhesion (By similarity).</text>
</comment>
<comment type="subunit">
    <text evidence="2">Interacts with DSC3; there is evidence to suggest that the interaction promotes cell-cell adhesion of keratinocytes.</text>
</comment>
<comment type="subcellular location">
    <subcellularLocation>
        <location evidence="3">Cell membrane</location>
        <topology evidence="3">Single-pass type I membrane protein</topology>
    </subcellularLocation>
    <subcellularLocation>
        <location evidence="3">Cell junction</location>
        <location evidence="3">Desmosome</location>
    </subcellularLocation>
    <subcellularLocation>
        <location evidence="2">Cytoplasm</location>
    </subcellularLocation>
    <subcellularLocation>
        <location evidence="2">Nucleus</location>
    </subcellularLocation>
</comment>
<comment type="alternative products">
    <event type="alternative splicing"/>
    <isoform>
        <id>Q7TSF0-1</id>
        <name>1</name>
        <sequence type="displayed"/>
    </isoform>
    <isoform>
        <id>Q7TSF0-2</id>
        <name>2</name>
        <sequence type="described" ref="VSP_012903 VSP_012904"/>
    </isoform>
</comment>
<comment type="tissue specificity">
    <text evidence="6 7">Expressed in epidermis, brain, liver, skeletal, muscle and testis.</text>
</comment>
<comment type="developmental stage">
    <text evidence="7">Expressed in embryo at 17 dpc.</text>
</comment>
<comment type="domain">
    <text evidence="1">Three calcium ions are usually bound at the interface of each cadherin domain and rigidify the connections, imparting a strong curvature to the full-length ectodomain.</text>
</comment>
<sequence>MDWHSFRIAALLLTSLVVLEVNSEFQIQVRDHNAKNGTIKWHSIRRQKREWIKFAAACREGEDNSKRNPIAKIHSDCAANQPVTYRISGVGIDQPPYGIFIINQKTGEINITSIVDREVTPFFIIYCRALNAQGQDLENPLELRVRVMDINDNPPVFSMTTFLGQIEENSNANTLVMKLNATDADEPNNLNSMIAFKIIRQEPSDSPMFTINRKTGEIRTMNNFLDREQYSQYSLVVRGSDRDGGADGMSAESECSITILDVNDNIPYLEQSSYDITIEENTLHSQLLQIRVIDLDEEFSDNWKAIIFFISGNEGNWFEIEMNERTNVGTLKVVKPLDYEAVKNLQLCIGVRNVAEFHQSIISQYRLTVTLITVTVLNVVKGCVFQPGSKTFIVDSRMEANHTVGEFLATDCETGQATNKFKNVRYRYVMGNNPENLLVVDSGIITLRNRVTMEQYERLNKRYEGTVLSIHDSLQRTCTGTIIMVLCGFWTTTEHPTTSTEKPVTLSITPNVDNVHFGPAGIGLLIMGFLVLGLVPFLLISCDCGGAPGGGAGFEPVPECSDGAIHTWAVEGPQPGGITTICVPQMPPGNANVIEYIDNSGVYTNEYCGREMQDLGGGERTTGFELMDGVKTSAAPEICQEYSGTLRRNSMRECRDGGLNMNFMESYFCQKAYAYADEDEGRPSNDCLLIYDIEGVGSPAGSVGCCSFIEDLDESFLDTLGPKFKKLADISLGKEIDSYPDPDPSWPPQSTEPICPQHMEQLASGHPSISPHFGKTTVISENAYPSGPGVQHPMLIPDPLGYGNITVRESYTTSGTLKPSVHFHDNQQASNVVVTERVVGPISGADLHGMLEIPALRDGTNVIVTERVIAPGSSLPNSLTIPNPRETSNVVVTERVIQPTSGMIGNLSIPP</sequence>
<feature type="signal peptide" evidence="4">
    <location>
        <begin position="1"/>
        <end position="23"/>
    </location>
</feature>
<feature type="propeptide" id="PRO_0000003843" evidence="4">
    <location>
        <begin position="24"/>
        <end position="49"/>
    </location>
</feature>
<feature type="chain" id="PRO_0000003844" description="Desmoglein-1-gamma">
    <location>
        <begin position="50"/>
        <end position="911"/>
    </location>
</feature>
<feature type="topological domain" description="Extracellular" evidence="4">
    <location>
        <begin position="50"/>
        <end position="519"/>
    </location>
</feature>
<feature type="transmembrane region" description="Helical" evidence="4">
    <location>
        <begin position="520"/>
        <end position="540"/>
    </location>
</feature>
<feature type="topological domain" description="Cytoplasmic" evidence="4">
    <location>
        <begin position="541"/>
        <end position="911"/>
    </location>
</feature>
<feature type="domain" description="Cadherin 1" evidence="5">
    <location>
        <begin position="50"/>
        <end position="157"/>
    </location>
</feature>
<feature type="domain" description="Cadherin 2" evidence="5">
    <location>
        <begin position="158"/>
        <end position="269"/>
    </location>
</feature>
<feature type="domain" description="Cadherin 3" evidence="5">
    <location>
        <begin position="270"/>
        <end position="389"/>
    </location>
</feature>
<feature type="repeat" description="Desmoglein repeat 1">
    <location>
        <begin position="783"/>
        <end position="809"/>
    </location>
</feature>
<feature type="repeat" description="Desmoglein repeat 2">
    <location>
        <begin position="810"/>
        <end position="839"/>
    </location>
</feature>
<feature type="repeat" description="Desmoglein repeat 3">
    <location>
        <begin position="840"/>
        <end position="869"/>
    </location>
</feature>
<feature type="repeat" description="Desmoglein repeat 4">
    <location>
        <begin position="870"/>
        <end position="897"/>
    </location>
</feature>
<feature type="repeat" description="Desmoglein repeat 5; truncated">
    <location>
        <begin position="898"/>
        <end position="911"/>
    </location>
</feature>
<feature type="glycosylation site" description="N-linked (GlcNAc...) (high mannose) asparagine" evidence="8">
    <location>
        <position position="110"/>
    </location>
</feature>
<feature type="glycosylation site" description="N-linked (GlcNAc...) asparagine" evidence="4">
    <location>
        <position position="180"/>
    </location>
</feature>
<feature type="glycosylation site" description="N-linked (GlcNAc...) asparagine" evidence="4">
    <location>
        <position position="401"/>
    </location>
</feature>
<feature type="splice variant" id="VSP_012903" description="In isoform 2." evidence="9">
    <original>RYV</original>
    <variation>V</variation>
    <location>
        <begin position="427"/>
        <end position="429"/>
    </location>
</feature>
<feature type="splice variant" id="VSP_012904" description="In isoform 2." evidence="9">
    <location>
        <begin position="430"/>
        <end position="911"/>
    </location>
</feature>
<feature type="sequence conflict" description="In Ref. 1; AAP79926." evidence="10" ref="1">
    <original>S</original>
    <variation>SRT</variation>
    <location>
        <position position="442"/>
    </location>
</feature>
<evidence type="ECO:0000250" key="1"/>
<evidence type="ECO:0000250" key="2">
    <source>
        <dbReference type="UniProtKB" id="Q02413"/>
    </source>
</evidence>
<evidence type="ECO:0000250" key="3">
    <source>
        <dbReference type="UniProtKB" id="Q7TSF1"/>
    </source>
</evidence>
<evidence type="ECO:0000255" key="4"/>
<evidence type="ECO:0000255" key="5">
    <source>
        <dbReference type="PROSITE-ProRule" id="PRU00043"/>
    </source>
</evidence>
<evidence type="ECO:0000269" key="6">
    <source>
    </source>
</evidence>
<evidence type="ECO:0000269" key="7">
    <source>
    </source>
</evidence>
<evidence type="ECO:0000269" key="8">
    <source>
    </source>
</evidence>
<evidence type="ECO:0000303" key="9">
    <source>
    </source>
</evidence>
<evidence type="ECO:0000305" key="10"/>
<accession>Q7TSF0</accession>
<accession>Q7TQ61</accession>
<dbReference type="EMBL" id="AY314983">
    <property type="protein sequence ID" value="AAP79926.1"/>
    <property type="molecule type" value="mRNA"/>
</dbReference>
<dbReference type="EMBL" id="AY192159">
    <property type="protein sequence ID" value="AAP31153.1"/>
    <property type="molecule type" value="mRNA"/>
</dbReference>
<dbReference type="CCDS" id="CCDS29079.1">
    <molecule id="Q7TSF0-1"/>
</dbReference>
<dbReference type="RefSeq" id="NP_859008.1">
    <molecule id="Q7TSF0-1"/>
    <property type="nucleotide sequence ID" value="NM_181680.2"/>
</dbReference>
<dbReference type="SMR" id="Q7TSF0"/>
<dbReference type="BioGRID" id="229273">
    <property type="interactions" value="2"/>
</dbReference>
<dbReference type="FunCoup" id="Q7TSF0">
    <property type="interactions" value="64"/>
</dbReference>
<dbReference type="STRING" id="10090.ENSMUSP00000054799"/>
<dbReference type="GlyCosmos" id="Q7TSF0">
    <property type="glycosylation" value="3 sites, No reported glycans"/>
</dbReference>
<dbReference type="GlyGen" id="Q7TSF0">
    <property type="glycosylation" value="4 sites"/>
</dbReference>
<dbReference type="iPTMnet" id="Q7TSF0"/>
<dbReference type="PhosphoSitePlus" id="Q7TSF0"/>
<dbReference type="PaxDb" id="10090-ENSMUSP00000054799"/>
<dbReference type="PeptideAtlas" id="Q7TSF0"/>
<dbReference type="ProteomicsDB" id="277505">
    <molecule id="Q7TSF0-1"/>
</dbReference>
<dbReference type="ProteomicsDB" id="277506">
    <molecule id="Q7TSF0-2"/>
</dbReference>
<dbReference type="DNASU" id="211924"/>
<dbReference type="Ensembl" id="ENSMUST00000054128.7">
    <molecule id="Q7TSF0-1"/>
    <property type="protein sequence ID" value="ENSMUSP00000054799.7"/>
    <property type="gene ID" value="ENSMUSG00000034774.7"/>
</dbReference>
<dbReference type="GeneID" id="211924"/>
<dbReference type="KEGG" id="mmu:211924"/>
<dbReference type="UCSC" id="uc008eej.1">
    <molecule id="Q7TSF0-2"/>
    <property type="organism name" value="mouse"/>
</dbReference>
<dbReference type="UCSC" id="uc008eek.1">
    <molecule id="Q7TSF0-1"/>
    <property type="organism name" value="mouse"/>
</dbReference>
<dbReference type="AGR" id="MGI:2664358"/>
<dbReference type="CTD" id="211924"/>
<dbReference type="MGI" id="MGI:2664358">
    <property type="gene designation" value="Dsg1c"/>
</dbReference>
<dbReference type="VEuPathDB" id="HostDB:ENSMUSG00000034774"/>
<dbReference type="eggNOG" id="KOG3594">
    <property type="taxonomic scope" value="Eukaryota"/>
</dbReference>
<dbReference type="GeneTree" id="ENSGT01030000234624"/>
<dbReference type="HOGENOM" id="CLU_005284_0_2_1"/>
<dbReference type="InParanoid" id="Q7TSF0"/>
<dbReference type="OrthoDB" id="8961010at2759"/>
<dbReference type="PhylomeDB" id="Q7TSF0"/>
<dbReference type="TreeFam" id="TF331809"/>
<dbReference type="BioGRID-ORCS" id="211924">
    <property type="hits" value="2 hits in 78 CRISPR screens"/>
</dbReference>
<dbReference type="PRO" id="PR:Q7TSF0"/>
<dbReference type="Proteomes" id="UP000000589">
    <property type="component" value="Chromosome 18"/>
</dbReference>
<dbReference type="RNAct" id="Q7TSF0">
    <property type="molecule type" value="protein"/>
</dbReference>
<dbReference type="Bgee" id="ENSMUSG00000034774">
    <property type="expression patterns" value="Expressed in liver and 6 other cell types or tissues"/>
</dbReference>
<dbReference type="GO" id="GO:0005737">
    <property type="term" value="C:cytoplasm"/>
    <property type="evidence" value="ECO:0007669"/>
    <property type="project" value="UniProtKB-SubCell"/>
</dbReference>
<dbReference type="GO" id="GO:0030057">
    <property type="term" value="C:desmosome"/>
    <property type="evidence" value="ECO:0000314"/>
    <property type="project" value="MGI"/>
</dbReference>
<dbReference type="GO" id="GO:0005634">
    <property type="term" value="C:nucleus"/>
    <property type="evidence" value="ECO:0007669"/>
    <property type="project" value="UniProtKB-SubCell"/>
</dbReference>
<dbReference type="GO" id="GO:0005886">
    <property type="term" value="C:plasma membrane"/>
    <property type="evidence" value="ECO:0007669"/>
    <property type="project" value="UniProtKB-SubCell"/>
</dbReference>
<dbReference type="GO" id="GO:0005509">
    <property type="term" value="F:calcium ion binding"/>
    <property type="evidence" value="ECO:0007669"/>
    <property type="project" value="InterPro"/>
</dbReference>
<dbReference type="GO" id="GO:0007156">
    <property type="term" value="P:homophilic cell adhesion via plasma membrane adhesion molecules"/>
    <property type="evidence" value="ECO:0007669"/>
    <property type="project" value="InterPro"/>
</dbReference>
<dbReference type="CDD" id="cd11304">
    <property type="entry name" value="Cadherin_repeat"/>
    <property type="match status" value="3"/>
</dbReference>
<dbReference type="FunFam" id="2.60.40.60:FF:000011">
    <property type="entry name" value="Cadherin 1"/>
    <property type="match status" value="1"/>
</dbReference>
<dbReference type="FunFam" id="2.60.40.60:FF:000068">
    <property type="entry name" value="Desmoglein 1"/>
    <property type="match status" value="1"/>
</dbReference>
<dbReference type="FunFam" id="2.60.40.60:FF:000083">
    <property type="entry name" value="Desmoglein 1"/>
    <property type="match status" value="1"/>
</dbReference>
<dbReference type="FunFam" id="4.10.900.10:FF:000003">
    <property type="entry name" value="Desmoglein 1"/>
    <property type="match status" value="1"/>
</dbReference>
<dbReference type="Gene3D" id="2.60.40.60">
    <property type="entry name" value="Cadherins"/>
    <property type="match status" value="3"/>
</dbReference>
<dbReference type="Gene3D" id="4.10.900.10">
    <property type="entry name" value="TCF3-CBD (Catenin binding domain)"/>
    <property type="match status" value="1"/>
</dbReference>
<dbReference type="InterPro" id="IPR050971">
    <property type="entry name" value="Cadherin-domain_protein"/>
</dbReference>
<dbReference type="InterPro" id="IPR002126">
    <property type="entry name" value="Cadherin-like_dom"/>
</dbReference>
<dbReference type="InterPro" id="IPR015919">
    <property type="entry name" value="Cadherin-like_sf"/>
</dbReference>
<dbReference type="InterPro" id="IPR020894">
    <property type="entry name" value="Cadherin_CS"/>
</dbReference>
<dbReference type="InterPro" id="IPR000233">
    <property type="entry name" value="Cadherin_Y-type_LIR"/>
</dbReference>
<dbReference type="InterPro" id="IPR027397">
    <property type="entry name" value="Catenin-bd_sf"/>
</dbReference>
<dbReference type="InterPro" id="IPR009122">
    <property type="entry name" value="Desmosomal_cadherin"/>
</dbReference>
<dbReference type="PANTHER" id="PTHR24025">
    <property type="entry name" value="DESMOGLEIN FAMILY MEMBER"/>
    <property type="match status" value="1"/>
</dbReference>
<dbReference type="PANTHER" id="PTHR24025:SF9">
    <property type="entry name" value="DESMOGLEIN-1"/>
    <property type="match status" value="1"/>
</dbReference>
<dbReference type="Pfam" id="PF01049">
    <property type="entry name" value="CADH_Y-type_LIR"/>
    <property type="match status" value="1"/>
</dbReference>
<dbReference type="Pfam" id="PF00028">
    <property type="entry name" value="Cadherin"/>
    <property type="match status" value="3"/>
</dbReference>
<dbReference type="PRINTS" id="PR00205">
    <property type="entry name" value="CADHERIN"/>
</dbReference>
<dbReference type="PRINTS" id="PR01819">
    <property type="entry name" value="DESMOGLEIN"/>
</dbReference>
<dbReference type="SMART" id="SM00112">
    <property type="entry name" value="CA"/>
    <property type="match status" value="3"/>
</dbReference>
<dbReference type="SUPFAM" id="SSF49313">
    <property type="entry name" value="Cadherin-like"/>
    <property type="match status" value="4"/>
</dbReference>
<dbReference type="PROSITE" id="PS00232">
    <property type="entry name" value="CADHERIN_1"/>
    <property type="match status" value="2"/>
</dbReference>
<dbReference type="PROSITE" id="PS50268">
    <property type="entry name" value="CADHERIN_2"/>
    <property type="match status" value="3"/>
</dbReference>
<keyword id="KW-0025">Alternative splicing</keyword>
<keyword id="KW-0106">Calcium</keyword>
<keyword id="KW-0130">Cell adhesion</keyword>
<keyword id="KW-0965">Cell junction</keyword>
<keyword id="KW-1003">Cell membrane</keyword>
<keyword id="KW-0165">Cleavage on pair of basic residues</keyword>
<keyword id="KW-0963">Cytoplasm</keyword>
<keyword id="KW-0325">Glycoprotein</keyword>
<keyword id="KW-0472">Membrane</keyword>
<keyword id="KW-0479">Metal-binding</keyword>
<keyword id="KW-0539">Nucleus</keyword>
<keyword id="KW-1185">Reference proteome</keyword>
<keyword id="KW-0677">Repeat</keyword>
<keyword id="KW-0732">Signal</keyword>
<keyword id="KW-0812">Transmembrane</keyword>
<keyword id="KW-1133">Transmembrane helix</keyword>
<protein>
    <recommendedName>
        <fullName>Desmoglein-1-gamma</fullName>
        <shortName>Dsg1-gamma</shortName>
    </recommendedName>
    <alternativeName>
        <fullName>Desmoglein-6</fullName>
    </alternativeName>
</protein>